<reference key="1">
    <citation type="journal article" date="2003" name="Proc. Natl. Acad. Sci. U.S.A.">
        <title>Genome sequence of the cyanobacterium Prochlorococcus marinus SS120, a nearly minimal oxyphototrophic genome.</title>
        <authorList>
            <person name="Dufresne A."/>
            <person name="Salanoubat M."/>
            <person name="Partensky F."/>
            <person name="Artiguenave F."/>
            <person name="Axmann I.M."/>
            <person name="Barbe V."/>
            <person name="Duprat S."/>
            <person name="Galperin M.Y."/>
            <person name="Koonin E.V."/>
            <person name="Le Gall F."/>
            <person name="Makarova K.S."/>
            <person name="Ostrowski M."/>
            <person name="Oztas S."/>
            <person name="Robert C."/>
            <person name="Rogozin I.B."/>
            <person name="Scanlan D.J."/>
            <person name="Tandeau de Marsac N."/>
            <person name="Weissenbach J."/>
            <person name="Wincker P."/>
            <person name="Wolf Y.I."/>
            <person name="Hess W.R."/>
        </authorList>
    </citation>
    <scope>NUCLEOTIDE SEQUENCE [LARGE SCALE GENOMIC DNA]</scope>
    <source>
        <strain>SARG / CCMP1375 / SS120</strain>
    </source>
</reference>
<evidence type="ECO:0000255" key="1">
    <source>
        <dbReference type="HAMAP-Rule" id="MF_00358"/>
    </source>
</evidence>
<evidence type="ECO:0000256" key="2">
    <source>
        <dbReference type="SAM" id="MobiDB-lite"/>
    </source>
</evidence>
<evidence type="ECO:0000305" key="3"/>
<feature type="chain" id="PRO_0000266727" description="Small ribosomal subunit protein bS21">
    <location>
        <begin position="1"/>
        <end position="59"/>
    </location>
</feature>
<feature type="region of interest" description="Disordered" evidence="2">
    <location>
        <begin position="39"/>
        <end position="59"/>
    </location>
</feature>
<feature type="compositionally biased region" description="Basic residues" evidence="2">
    <location>
        <begin position="45"/>
        <end position="59"/>
    </location>
</feature>
<gene>
    <name evidence="1" type="primary">rpsU</name>
    <name evidence="1" type="synonym">rps21</name>
    <name type="ordered locus">Pro_0590</name>
</gene>
<accession>Q7VCZ9</accession>
<proteinExistence type="inferred from homology"/>
<comment type="similarity">
    <text evidence="1">Belongs to the bacterial ribosomal protein bS21 family.</text>
</comment>
<name>RS21_PROMA</name>
<organism>
    <name type="scientific">Prochlorococcus marinus (strain SARG / CCMP1375 / SS120)</name>
    <dbReference type="NCBI Taxonomy" id="167539"/>
    <lineage>
        <taxon>Bacteria</taxon>
        <taxon>Bacillati</taxon>
        <taxon>Cyanobacteriota</taxon>
        <taxon>Cyanophyceae</taxon>
        <taxon>Synechococcales</taxon>
        <taxon>Prochlorococcaceae</taxon>
        <taxon>Prochlorococcus</taxon>
    </lineage>
</organism>
<protein>
    <recommendedName>
        <fullName evidence="1">Small ribosomal subunit protein bS21</fullName>
    </recommendedName>
    <alternativeName>
        <fullName evidence="3">30S ribosomal protein S21</fullName>
    </alternativeName>
</protein>
<keyword id="KW-1185">Reference proteome</keyword>
<keyword id="KW-0687">Ribonucleoprotein</keyword>
<keyword id="KW-0689">Ribosomal protein</keyword>
<sequence length="59" mass="7175">MTQVIVGENEGVESALRRFKREVSKAGIFNDLKRIRHHETPVEKYKRKQRLKNRTKRRR</sequence>
<dbReference type="EMBL" id="AE017126">
    <property type="protein sequence ID" value="AAP99635.1"/>
    <property type="molecule type" value="Genomic_DNA"/>
</dbReference>
<dbReference type="RefSeq" id="NP_874983.1">
    <property type="nucleotide sequence ID" value="NC_005042.1"/>
</dbReference>
<dbReference type="RefSeq" id="WP_011124743.1">
    <property type="nucleotide sequence ID" value="NC_005042.1"/>
</dbReference>
<dbReference type="SMR" id="Q7VCZ9"/>
<dbReference type="STRING" id="167539.Pro_0590"/>
<dbReference type="EnsemblBacteria" id="AAP99635">
    <property type="protein sequence ID" value="AAP99635"/>
    <property type="gene ID" value="Pro_0590"/>
</dbReference>
<dbReference type="KEGG" id="pma:Pro_0590"/>
<dbReference type="PATRIC" id="fig|167539.5.peg.606"/>
<dbReference type="eggNOG" id="COG0828">
    <property type="taxonomic scope" value="Bacteria"/>
</dbReference>
<dbReference type="HOGENOM" id="CLU_159258_3_1_3"/>
<dbReference type="OrthoDB" id="9799244at2"/>
<dbReference type="Proteomes" id="UP000001420">
    <property type="component" value="Chromosome"/>
</dbReference>
<dbReference type="GO" id="GO:1990904">
    <property type="term" value="C:ribonucleoprotein complex"/>
    <property type="evidence" value="ECO:0007669"/>
    <property type="project" value="UniProtKB-KW"/>
</dbReference>
<dbReference type="GO" id="GO:0005840">
    <property type="term" value="C:ribosome"/>
    <property type="evidence" value="ECO:0007669"/>
    <property type="project" value="UniProtKB-KW"/>
</dbReference>
<dbReference type="GO" id="GO:0003735">
    <property type="term" value="F:structural constituent of ribosome"/>
    <property type="evidence" value="ECO:0007669"/>
    <property type="project" value="InterPro"/>
</dbReference>
<dbReference type="GO" id="GO:0006412">
    <property type="term" value="P:translation"/>
    <property type="evidence" value="ECO:0007669"/>
    <property type="project" value="UniProtKB-UniRule"/>
</dbReference>
<dbReference type="Gene3D" id="1.20.5.1150">
    <property type="entry name" value="Ribosomal protein S8"/>
    <property type="match status" value="1"/>
</dbReference>
<dbReference type="HAMAP" id="MF_00358">
    <property type="entry name" value="Ribosomal_bS21"/>
    <property type="match status" value="1"/>
</dbReference>
<dbReference type="InterPro" id="IPR001911">
    <property type="entry name" value="Ribosomal_bS21"/>
</dbReference>
<dbReference type="InterPro" id="IPR018278">
    <property type="entry name" value="Ribosomal_bS21_CS"/>
</dbReference>
<dbReference type="InterPro" id="IPR038380">
    <property type="entry name" value="Ribosomal_bS21_sf"/>
</dbReference>
<dbReference type="NCBIfam" id="TIGR00030">
    <property type="entry name" value="S21p"/>
    <property type="match status" value="1"/>
</dbReference>
<dbReference type="PANTHER" id="PTHR21109">
    <property type="entry name" value="MITOCHONDRIAL 28S RIBOSOMAL PROTEIN S21"/>
    <property type="match status" value="1"/>
</dbReference>
<dbReference type="PANTHER" id="PTHR21109:SF0">
    <property type="entry name" value="SMALL RIBOSOMAL SUBUNIT PROTEIN BS21M"/>
    <property type="match status" value="1"/>
</dbReference>
<dbReference type="Pfam" id="PF01165">
    <property type="entry name" value="Ribosomal_S21"/>
    <property type="match status" value="1"/>
</dbReference>
<dbReference type="PRINTS" id="PR00976">
    <property type="entry name" value="RIBOSOMALS21"/>
</dbReference>
<dbReference type="PROSITE" id="PS01181">
    <property type="entry name" value="RIBOSOMAL_S21"/>
    <property type="match status" value="1"/>
</dbReference>